<gene>
    <name type="primary">crtB</name>
</gene>
<reference key="1">
    <citation type="journal article" date="1995" name="J. Bacteriol.">
        <title>Structure and functional analysis of a marine bacterial carotenoid biosynthesis gene cluster and astaxanthin biosynthetic pathway proposed at the gene level.</title>
        <authorList>
            <person name="Misawa N."/>
            <person name="Satomi Y."/>
            <person name="Kondo K."/>
            <person name="Yokoyama A."/>
            <person name="Kajiwara S."/>
            <person name="Saito T."/>
            <person name="Ohtani T."/>
            <person name="Miki W."/>
        </authorList>
    </citation>
    <scope>NUCLEOTIDE SEQUENCE [GENOMIC DNA]</scope>
    <scope>FUNCTION</scope>
    <scope>CATALYTIC ACTIVITY</scope>
</reference>
<reference key="2">
    <citation type="submission" date="2005-03" db="EMBL/GenBank/DDBJ databases">
        <authorList>
            <person name="Misawa N."/>
        </authorList>
    </citation>
    <scope>SEQUENCE REVISION TO 56; 90-92 AND 284-295</scope>
</reference>
<reference key="3">
    <citation type="submission" date="2005-03" db="EMBL/GenBank/DDBJ databases">
        <title>Structure of the complete carotenoid biosynthesis gene cluster of Paracoccus sp. strain N81106.</title>
        <authorList>
            <person name="Maruyama T."/>
            <person name="Inomata Y."/>
            <person name="Haga M."/>
            <person name="Ide T."/>
            <person name="Misawa N."/>
        </authorList>
    </citation>
    <scope>NUCLEOTIDE SEQUENCE [GENOMIC DNA]</scope>
</reference>
<feature type="chain" id="PRO_0000067430" description="15-cis-phytoene synthase">
    <location>
        <begin position="1"/>
        <end position="304"/>
    </location>
</feature>
<dbReference type="EC" id="2.5.1.32"/>
<dbReference type="EMBL" id="D58420">
    <property type="protein sequence ID" value="BAA09595.2"/>
    <property type="molecule type" value="Genomic_DNA"/>
</dbReference>
<dbReference type="EMBL" id="AB206672">
    <property type="protein sequence ID" value="BAE47469.1"/>
    <property type="molecule type" value="Genomic_DNA"/>
</dbReference>
<dbReference type="SMR" id="P54975"/>
<dbReference type="UniPathway" id="UPA00387"/>
<dbReference type="UniPathway" id="UPA00799"/>
<dbReference type="GO" id="GO:0046905">
    <property type="term" value="F:15-cis-phytoene synthase activity"/>
    <property type="evidence" value="ECO:0000314"/>
    <property type="project" value="UniProtKB"/>
</dbReference>
<dbReference type="GO" id="GO:0004311">
    <property type="term" value="F:geranylgeranyl diphosphate synthase activity"/>
    <property type="evidence" value="ECO:0007669"/>
    <property type="project" value="InterPro"/>
</dbReference>
<dbReference type="GO" id="GO:0046872">
    <property type="term" value="F:metal ion binding"/>
    <property type="evidence" value="ECO:0007669"/>
    <property type="project" value="UniProtKB-KW"/>
</dbReference>
<dbReference type="GO" id="GO:0051996">
    <property type="term" value="F:squalene synthase [NAD(P)H] activity"/>
    <property type="evidence" value="ECO:0007669"/>
    <property type="project" value="InterPro"/>
</dbReference>
<dbReference type="GO" id="GO:0016117">
    <property type="term" value="P:carotenoid biosynthetic process"/>
    <property type="evidence" value="ECO:0000314"/>
    <property type="project" value="UniProtKB"/>
</dbReference>
<dbReference type="CDD" id="cd00683">
    <property type="entry name" value="Trans_IPPS_HH"/>
    <property type="match status" value="1"/>
</dbReference>
<dbReference type="FunFam" id="1.10.600.10:FF:000020">
    <property type="entry name" value="Phytoene synthase"/>
    <property type="match status" value="1"/>
</dbReference>
<dbReference type="Gene3D" id="1.10.600.10">
    <property type="entry name" value="Farnesyl Diphosphate Synthase"/>
    <property type="match status" value="1"/>
</dbReference>
<dbReference type="InterPro" id="IPR008949">
    <property type="entry name" value="Isoprenoid_synthase_dom_sf"/>
</dbReference>
<dbReference type="InterPro" id="IPR002060">
    <property type="entry name" value="Squ/phyt_synthse"/>
</dbReference>
<dbReference type="InterPro" id="IPR019845">
    <property type="entry name" value="Squalene/phytoene_synthase_CS"/>
</dbReference>
<dbReference type="InterPro" id="IPR044843">
    <property type="entry name" value="Trans_IPPS_bact-type"/>
</dbReference>
<dbReference type="InterPro" id="IPR033904">
    <property type="entry name" value="Trans_IPPS_HH"/>
</dbReference>
<dbReference type="PANTHER" id="PTHR31480">
    <property type="entry name" value="BIFUNCTIONAL LYCOPENE CYCLASE/PHYTOENE SYNTHASE"/>
    <property type="match status" value="1"/>
</dbReference>
<dbReference type="Pfam" id="PF00494">
    <property type="entry name" value="SQS_PSY"/>
    <property type="match status" value="1"/>
</dbReference>
<dbReference type="SFLD" id="SFLDS00005">
    <property type="entry name" value="Isoprenoid_Synthase_Type_I"/>
    <property type="match status" value="1"/>
</dbReference>
<dbReference type="SFLD" id="SFLDG01212">
    <property type="entry name" value="Phytoene_synthase_like"/>
    <property type="match status" value="1"/>
</dbReference>
<dbReference type="SUPFAM" id="SSF48576">
    <property type="entry name" value="Terpenoid synthases"/>
    <property type="match status" value="1"/>
</dbReference>
<dbReference type="PROSITE" id="PS01044">
    <property type="entry name" value="SQUALEN_PHYTOEN_SYN_1"/>
    <property type="match status" value="1"/>
</dbReference>
<dbReference type="PROSITE" id="PS01045">
    <property type="entry name" value="SQUALEN_PHYTOEN_SYN_2"/>
    <property type="match status" value="1"/>
</dbReference>
<name>CRTB_PARSN</name>
<evidence type="ECO:0000250" key="1"/>
<evidence type="ECO:0000269" key="2">
    <source>
    </source>
</evidence>
<evidence type="ECO:0000305" key="3"/>
<proteinExistence type="evidence at protein level"/>
<protein>
    <recommendedName>
        <fullName>15-cis-phytoene synthase</fullName>
        <shortName>PSase</shortName>
        <ecNumber>2.5.1.32</ecNumber>
    </recommendedName>
</protein>
<accession>P54975</accession>
<accession>Q33DT6</accession>
<comment type="function">
    <text evidence="2">Involved in the biosynthesis of carotenoids for the production of astaxanthin. Catalyzes the condensation of two molecules of geranylgeranyl diphosphate (GGPP) to give prephytoene diphosphate (PPPP) and the subsequent rearrangement of the cyclopropylcarbinyl intermediate to yield 15-cis phytoene.</text>
</comment>
<comment type="catalytic activity">
    <reaction evidence="2">
        <text>2 (2E,6E,10E)-geranylgeranyl diphosphate = 15-cis-phytoene + 2 diphosphate</text>
        <dbReference type="Rhea" id="RHEA:34475"/>
        <dbReference type="ChEBI" id="CHEBI:27787"/>
        <dbReference type="ChEBI" id="CHEBI:33019"/>
        <dbReference type="ChEBI" id="CHEBI:58756"/>
        <dbReference type="EC" id="2.5.1.32"/>
    </reaction>
</comment>
<comment type="cofactor">
    <cofactor evidence="1">
        <name>ATP</name>
        <dbReference type="ChEBI" id="CHEBI:30616"/>
    </cofactor>
    <text evidence="1">ATP is required for the transferase activity but it does not seem to be hydrolyzed during the reaction.</text>
</comment>
<comment type="cofactor">
    <cofactor evidence="1">
        <name>Mn(2+)</name>
        <dbReference type="ChEBI" id="CHEBI:29035"/>
    </cofactor>
    <cofactor evidence="1">
        <name>Mg(2+)</name>
        <dbReference type="ChEBI" id="CHEBI:18420"/>
    </cofactor>
</comment>
<comment type="pathway">
    <text>Carotenoid biosynthesis; astaxanthin biosynthesis.</text>
</comment>
<comment type="pathway">
    <text>Carotenoid biosynthesis; phytoene biosynthesis.</text>
</comment>
<comment type="similarity">
    <text evidence="3">Belongs to the phytoene/squalene synthase family.</text>
</comment>
<sequence length="304" mass="33030">MSDLVLTSTEAITQGSQSFATAAKLMPPGIRDDTVMLYAWCRHADDVIDGQALGSRPEAVNDPQARLDGLRADTLAALQGDGPVTPPFAALRAVARRHDFPQAWPMDLIEGFAMDVEARDYRTLDDVLEYSYHVAGIVGVMMARVMGVRDDPVLDRACDLGLAFQLTNIARDVIDDARIGRCYLPGDWLDQAGARVDGPVPSPELYTVILRLLDAAELYYASARVGLADLPPRCAWSIAAALRIYRAIGLRIRKGGPEAYRQRISTSKAAKIGLLGIGGWDVARSRLPGAGVSRQGLWTRPHHA</sequence>
<organism>
    <name type="scientific">Paracoccus sp. (strain N81106 / MBIC 01143)</name>
    <name type="common">Agrobacterium aurantiacum</name>
    <dbReference type="NCBI Taxonomy" id="81397"/>
    <lineage>
        <taxon>Bacteria</taxon>
        <taxon>Pseudomonadati</taxon>
        <taxon>Pseudomonadota</taxon>
        <taxon>Alphaproteobacteria</taxon>
        <taxon>Rhodobacterales</taxon>
        <taxon>Paracoccaceae</taxon>
        <taxon>Paracoccus</taxon>
    </lineage>
</organism>
<keyword id="KW-0125">Carotenoid biosynthesis</keyword>
<keyword id="KW-0460">Magnesium</keyword>
<keyword id="KW-0464">Manganese</keyword>
<keyword id="KW-0479">Metal-binding</keyword>
<keyword id="KW-0808">Transferase</keyword>